<organism>
    <name type="scientific">Streptococcus pyogenes serotype M3 (strain ATCC BAA-595 / MGAS315)</name>
    <dbReference type="NCBI Taxonomy" id="198466"/>
    <lineage>
        <taxon>Bacteria</taxon>
        <taxon>Bacillati</taxon>
        <taxon>Bacillota</taxon>
        <taxon>Bacilli</taxon>
        <taxon>Lactobacillales</taxon>
        <taxon>Streptococcaceae</taxon>
        <taxon>Streptococcus</taxon>
    </lineage>
</organism>
<name>SYK_STRP3</name>
<protein>
    <recommendedName>
        <fullName evidence="1">Lysine--tRNA ligase</fullName>
        <ecNumber evidence="1">6.1.1.6</ecNumber>
    </recommendedName>
    <alternativeName>
        <fullName evidence="1">Lysyl-tRNA synthetase</fullName>
        <shortName evidence="1">LysRS</shortName>
    </alternativeName>
</protein>
<reference key="1">
    <citation type="journal article" date="2002" name="Proc. Natl. Acad. Sci. U.S.A.">
        <title>Genome sequence of a serotype M3 strain of group A Streptococcus: phage-encoded toxins, the high-virulence phenotype, and clone emergence.</title>
        <authorList>
            <person name="Beres S.B."/>
            <person name="Sylva G.L."/>
            <person name="Barbian K.D."/>
            <person name="Lei B."/>
            <person name="Hoff J.S."/>
            <person name="Mammarella N.D."/>
            <person name="Liu M.-Y."/>
            <person name="Smoot J.C."/>
            <person name="Porcella S.F."/>
            <person name="Parkins L.D."/>
            <person name="Campbell D.S."/>
            <person name="Smith T.M."/>
            <person name="McCormick J.K."/>
            <person name="Leung D.Y.M."/>
            <person name="Schlievert P.M."/>
            <person name="Musser J.M."/>
        </authorList>
    </citation>
    <scope>NUCLEOTIDE SEQUENCE [LARGE SCALE GENOMIC DNA]</scope>
    <source>
        <strain>ATCC BAA-595 / MGAS315</strain>
    </source>
</reference>
<evidence type="ECO:0000255" key="1">
    <source>
        <dbReference type="HAMAP-Rule" id="MF_00252"/>
    </source>
</evidence>
<dbReference type="EC" id="6.1.1.6" evidence="1"/>
<dbReference type="EMBL" id="AE014074">
    <property type="protein sequence ID" value="AAM79027.1"/>
    <property type="molecule type" value="Genomic_DNA"/>
</dbReference>
<dbReference type="RefSeq" id="WP_011054296.1">
    <property type="nucleotide sequence ID" value="NC_004070.1"/>
</dbReference>
<dbReference type="SMR" id="P0DG46"/>
<dbReference type="KEGG" id="spg:SpyM3_0420"/>
<dbReference type="HOGENOM" id="CLU_008255_6_0_9"/>
<dbReference type="Proteomes" id="UP000000564">
    <property type="component" value="Chromosome"/>
</dbReference>
<dbReference type="GO" id="GO:0005829">
    <property type="term" value="C:cytosol"/>
    <property type="evidence" value="ECO:0007669"/>
    <property type="project" value="TreeGrafter"/>
</dbReference>
<dbReference type="GO" id="GO:0005524">
    <property type="term" value="F:ATP binding"/>
    <property type="evidence" value="ECO:0007669"/>
    <property type="project" value="UniProtKB-UniRule"/>
</dbReference>
<dbReference type="GO" id="GO:0140096">
    <property type="term" value="F:catalytic activity, acting on a protein"/>
    <property type="evidence" value="ECO:0007669"/>
    <property type="project" value="UniProtKB-ARBA"/>
</dbReference>
<dbReference type="GO" id="GO:0004824">
    <property type="term" value="F:lysine-tRNA ligase activity"/>
    <property type="evidence" value="ECO:0007669"/>
    <property type="project" value="UniProtKB-UniRule"/>
</dbReference>
<dbReference type="GO" id="GO:0000287">
    <property type="term" value="F:magnesium ion binding"/>
    <property type="evidence" value="ECO:0007669"/>
    <property type="project" value="UniProtKB-UniRule"/>
</dbReference>
<dbReference type="GO" id="GO:0016740">
    <property type="term" value="F:transferase activity"/>
    <property type="evidence" value="ECO:0007669"/>
    <property type="project" value="UniProtKB-ARBA"/>
</dbReference>
<dbReference type="GO" id="GO:0000049">
    <property type="term" value="F:tRNA binding"/>
    <property type="evidence" value="ECO:0007669"/>
    <property type="project" value="TreeGrafter"/>
</dbReference>
<dbReference type="GO" id="GO:0006430">
    <property type="term" value="P:lysyl-tRNA aminoacylation"/>
    <property type="evidence" value="ECO:0007669"/>
    <property type="project" value="UniProtKB-UniRule"/>
</dbReference>
<dbReference type="CDD" id="cd00775">
    <property type="entry name" value="LysRS_core"/>
    <property type="match status" value="1"/>
</dbReference>
<dbReference type="CDD" id="cd04322">
    <property type="entry name" value="LysRS_N"/>
    <property type="match status" value="1"/>
</dbReference>
<dbReference type="FunFam" id="2.40.50.140:FF:000024">
    <property type="entry name" value="Lysine--tRNA ligase"/>
    <property type="match status" value="1"/>
</dbReference>
<dbReference type="FunFam" id="3.30.930.10:FF:000001">
    <property type="entry name" value="Lysine--tRNA ligase"/>
    <property type="match status" value="1"/>
</dbReference>
<dbReference type="Gene3D" id="3.30.930.10">
    <property type="entry name" value="Bira Bifunctional Protein, Domain 2"/>
    <property type="match status" value="1"/>
</dbReference>
<dbReference type="Gene3D" id="2.40.50.140">
    <property type="entry name" value="Nucleic acid-binding proteins"/>
    <property type="match status" value="1"/>
</dbReference>
<dbReference type="HAMAP" id="MF_00252">
    <property type="entry name" value="Lys_tRNA_synth_class2"/>
    <property type="match status" value="1"/>
</dbReference>
<dbReference type="InterPro" id="IPR004364">
    <property type="entry name" value="Aa-tRNA-synt_II"/>
</dbReference>
<dbReference type="InterPro" id="IPR006195">
    <property type="entry name" value="aa-tRNA-synth_II"/>
</dbReference>
<dbReference type="InterPro" id="IPR045864">
    <property type="entry name" value="aa-tRNA-synth_II/BPL/LPL"/>
</dbReference>
<dbReference type="InterPro" id="IPR002313">
    <property type="entry name" value="Lys-tRNA-ligase_II"/>
</dbReference>
<dbReference type="InterPro" id="IPR044136">
    <property type="entry name" value="Lys-tRNA-ligase_II_N"/>
</dbReference>
<dbReference type="InterPro" id="IPR018149">
    <property type="entry name" value="Lys-tRNA-synth_II_C"/>
</dbReference>
<dbReference type="InterPro" id="IPR012340">
    <property type="entry name" value="NA-bd_OB-fold"/>
</dbReference>
<dbReference type="InterPro" id="IPR004365">
    <property type="entry name" value="NA-bd_OB_tRNA"/>
</dbReference>
<dbReference type="NCBIfam" id="TIGR00499">
    <property type="entry name" value="lysS_bact"/>
    <property type="match status" value="1"/>
</dbReference>
<dbReference type="NCBIfam" id="NF001756">
    <property type="entry name" value="PRK00484.1"/>
    <property type="match status" value="1"/>
</dbReference>
<dbReference type="PANTHER" id="PTHR42918:SF15">
    <property type="entry name" value="LYSINE--TRNA LIGASE, CHLOROPLASTIC_MITOCHONDRIAL"/>
    <property type="match status" value="1"/>
</dbReference>
<dbReference type="PANTHER" id="PTHR42918">
    <property type="entry name" value="LYSYL-TRNA SYNTHETASE"/>
    <property type="match status" value="1"/>
</dbReference>
<dbReference type="Pfam" id="PF00152">
    <property type="entry name" value="tRNA-synt_2"/>
    <property type="match status" value="1"/>
</dbReference>
<dbReference type="Pfam" id="PF01336">
    <property type="entry name" value="tRNA_anti-codon"/>
    <property type="match status" value="1"/>
</dbReference>
<dbReference type="PRINTS" id="PR00982">
    <property type="entry name" value="TRNASYNTHLYS"/>
</dbReference>
<dbReference type="SUPFAM" id="SSF55681">
    <property type="entry name" value="Class II aaRS and biotin synthetases"/>
    <property type="match status" value="1"/>
</dbReference>
<dbReference type="SUPFAM" id="SSF50249">
    <property type="entry name" value="Nucleic acid-binding proteins"/>
    <property type="match status" value="1"/>
</dbReference>
<dbReference type="PROSITE" id="PS50862">
    <property type="entry name" value="AA_TRNA_LIGASE_II"/>
    <property type="match status" value="1"/>
</dbReference>
<accession>P0DG46</accession>
<accession>Q878F7</accession>
<accession>Q8K880</accession>
<keyword id="KW-0030">Aminoacyl-tRNA synthetase</keyword>
<keyword id="KW-0067">ATP-binding</keyword>
<keyword id="KW-0963">Cytoplasm</keyword>
<keyword id="KW-0436">Ligase</keyword>
<keyword id="KW-0460">Magnesium</keyword>
<keyword id="KW-0479">Metal-binding</keyword>
<keyword id="KW-0547">Nucleotide-binding</keyword>
<keyword id="KW-0648">Protein biosynthesis</keyword>
<comment type="catalytic activity">
    <reaction evidence="1">
        <text>tRNA(Lys) + L-lysine + ATP = L-lysyl-tRNA(Lys) + AMP + diphosphate</text>
        <dbReference type="Rhea" id="RHEA:20792"/>
        <dbReference type="Rhea" id="RHEA-COMP:9696"/>
        <dbReference type="Rhea" id="RHEA-COMP:9697"/>
        <dbReference type="ChEBI" id="CHEBI:30616"/>
        <dbReference type="ChEBI" id="CHEBI:32551"/>
        <dbReference type="ChEBI" id="CHEBI:33019"/>
        <dbReference type="ChEBI" id="CHEBI:78442"/>
        <dbReference type="ChEBI" id="CHEBI:78529"/>
        <dbReference type="ChEBI" id="CHEBI:456215"/>
        <dbReference type="EC" id="6.1.1.6"/>
    </reaction>
</comment>
<comment type="cofactor">
    <cofactor evidence="1">
        <name>Mg(2+)</name>
        <dbReference type="ChEBI" id="CHEBI:18420"/>
    </cofactor>
    <text evidence="1">Binds 3 Mg(2+) ions per subunit.</text>
</comment>
<comment type="subunit">
    <text evidence="1">Homodimer.</text>
</comment>
<comment type="subcellular location">
    <subcellularLocation>
        <location evidence="1">Cytoplasm</location>
    </subcellularLocation>
</comment>
<comment type="similarity">
    <text evidence="1">Belongs to the class-II aminoacyl-tRNA synthetase family.</text>
</comment>
<sequence length="497" mass="56545">MSNQHIEELNDQQIVRREKMMALAEQGIDPFGKRFGRTANSAELKENYADKTKEELHELNETAIVAGRLMTKRGKGKVGFAHLQDREGQIQLYVRKDSVGEDNYEIFKKADLGDFIGVEGEVMRTDMGELSIKATKLTHLSKSLRPLPEKFHGLTDIETIYRKRHLDLISNRESFDRFVTRSKMISEIRRYLDGLDFLEVETPVLHNEAGGAAARPFVTHHNAQNIDMVLRIATELHLKRLIVGGMERVYEIGRIFRNEGMDATHNPEFTSIEVYQAYADYLDIMNLTEGIIQHAAKAVKGDGPIDYQGTEIRINEPFKRVHMVDAIKEVTGVDFWPEMTVEEAIALAKEKQVPLEKHFTSVGHIINAFFEEFVEETLVQPTFVFGHPVEVSPLAKKNPEDTRFTDRFELFIMTKEYANAFTELNDPIDQLSRFEAQAQAKELGDDEATGIDYDFVEALEYGMPPTGGLGIGIDRLCMLLTNTTTIRDVLLFPTMKP</sequence>
<feature type="chain" id="PRO_0000152690" description="Lysine--tRNA ligase">
    <location>
        <begin position="1"/>
        <end position="497"/>
    </location>
</feature>
<feature type="binding site" evidence="1">
    <location>
        <position position="409"/>
    </location>
    <ligand>
        <name>Mg(2+)</name>
        <dbReference type="ChEBI" id="CHEBI:18420"/>
        <label>1</label>
    </ligand>
</feature>
<feature type="binding site" evidence="1">
    <location>
        <position position="416"/>
    </location>
    <ligand>
        <name>Mg(2+)</name>
        <dbReference type="ChEBI" id="CHEBI:18420"/>
        <label>1</label>
    </ligand>
</feature>
<feature type="binding site" evidence="1">
    <location>
        <position position="416"/>
    </location>
    <ligand>
        <name>Mg(2+)</name>
        <dbReference type="ChEBI" id="CHEBI:18420"/>
        <label>2</label>
    </ligand>
</feature>
<gene>
    <name evidence="1" type="primary">lysS</name>
    <name type="ordered locus">SpyM3_0420</name>
</gene>
<proteinExistence type="inferred from homology"/>